<gene>
    <name evidence="12" type="primary">OR51E2</name>
    <name evidence="11" type="synonym">PSGR</name>
</gene>
<reference key="1">
    <citation type="journal article" date="2000" name="Cancer Res.">
        <title>PSGR, a novel prostate-specific gene with homology to a G protein-coupled receptor, is overexpressed in prostate cancer.</title>
        <authorList>
            <person name="Xu L.L."/>
            <person name="Stackhouse B.G."/>
            <person name="Florence K."/>
            <person name="Zhang W."/>
            <person name="Shanmugam N."/>
            <person name="Sesterhenn I.A."/>
            <person name="Zou Z."/>
            <person name="Srikantan V."/>
            <person name="Augustus M."/>
            <person name="Roschke V."/>
            <person name="Carter K."/>
            <person name="McLeod D.G."/>
            <person name="Moul J.W."/>
            <person name="Soppet D."/>
            <person name="Srivastava S."/>
        </authorList>
    </citation>
    <scope>NUCLEOTIDE SEQUENCE [GENOMIC DNA]</scope>
    <scope>INDUCTION</scope>
</reference>
<reference key="2">
    <citation type="submission" date="2001-04" db="EMBL/GenBank/DDBJ databases">
        <title>Identification of a prostate-specific G-protein coupled receptor (PSGR) that interacts with G alpha subunit in yeast two hybrid assay.</title>
        <authorList>
            <person name="Xia C."/>
            <person name="Ma W."/>
            <person name="Liu M."/>
        </authorList>
    </citation>
    <scope>NUCLEOTIDE SEQUENCE [MRNA]</scope>
</reference>
<reference key="3">
    <citation type="journal article" date="2001" name="Gene">
        <title>Cloning and genetic characterization of an evolutionarily conserved human olfactory receptor that is differentially expressed across species.</title>
        <authorList>
            <person name="Yuan T.T."/>
            <person name="Toy P."/>
            <person name="McClary J.A."/>
            <person name="Lin R.J."/>
            <person name="Miyamoto N.G."/>
            <person name="Kretschmer P.J."/>
        </authorList>
    </citation>
    <scope>NUCLEOTIDE SEQUENCE [MRNA]</scope>
    <scope>TISSUE SPECIFICITY</scope>
</reference>
<reference key="4">
    <citation type="journal article" date="2004" name="Nat. Genet.">
        <title>Complete sequencing and characterization of 21,243 full-length human cDNAs.</title>
        <authorList>
            <person name="Ota T."/>
            <person name="Suzuki Y."/>
            <person name="Nishikawa T."/>
            <person name="Otsuki T."/>
            <person name="Sugiyama T."/>
            <person name="Irie R."/>
            <person name="Wakamatsu A."/>
            <person name="Hayashi K."/>
            <person name="Sato H."/>
            <person name="Nagai K."/>
            <person name="Kimura K."/>
            <person name="Makita H."/>
            <person name="Sekine M."/>
            <person name="Obayashi M."/>
            <person name="Nishi T."/>
            <person name="Shibahara T."/>
            <person name="Tanaka T."/>
            <person name="Ishii S."/>
            <person name="Yamamoto J."/>
            <person name="Saito K."/>
            <person name="Kawai Y."/>
            <person name="Isono Y."/>
            <person name="Nakamura Y."/>
            <person name="Nagahari K."/>
            <person name="Murakami K."/>
            <person name="Yasuda T."/>
            <person name="Iwayanagi T."/>
            <person name="Wagatsuma M."/>
            <person name="Shiratori A."/>
            <person name="Sudo H."/>
            <person name="Hosoiri T."/>
            <person name="Kaku Y."/>
            <person name="Kodaira H."/>
            <person name="Kondo H."/>
            <person name="Sugawara M."/>
            <person name="Takahashi M."/>
            <person name="Kanda K."/>
            <person name="Yokoi T."/>
            <person name="Furuya T."/>
            <person name="Kikkawa E."/>
            <person name="Omura Y."/>
            <person name="Abe K."/>
            <person name="Kamihara K."/>
            <person name="Katsuta N."/>
            <person name="Sato K."/>
            <person name="Tanikawa M."/>
            <person name="Yamazaki M."/>
            <person name="Ninomiya K."/>
            <person name="Ishibashi T."/>
            <person name="Yamashita H."/>
            <person name="Murakawa K."/>
            <person name="Fujimori K."/>
            <person name="Tanai H."/>
            <person name="Kimata M."/>
            <person name="Watanabe M."/>
            <person name="Hiraoka S."/>
            <person name="Chiba Y."/>
            <person name="Ishida S."/>
            <person name="Ono Y."/>
            <person name="Takiguchi S."/>
            <person name="Watanabe S."/>
            <person name="Yosida M."/>
            <person name="Hotuta T."/>
            <person name="Kusano J."/>
            <person name="Kanehori K."/>
            <person name="Takahashi-Fujii A."/>
            <person name="Hara H."/>
            <person name="Tanase T.-O."/>
            <person name="Nomura Y."/>
            <person name="Togiya S."/>
            <person name="Komai F."/>
            <person name="Hara R."/>
            <person name="Takeuchi K."/>
            <person name="Arita M."/>
            <person name="Imose N."/>
            <person name="Musashino K."/>
            <person name="Yuuki H."/>
            <person name="Oshima A."/>
            <person name="Sasaki N."/>
            <person name="Aotsuka S."/>
            <person name="Yoshikawa Y."/>
            <person name="Matsunawa H."/>
            <person name="Ichihara T."/>
            <person name="Shiohata N."/>
            <person name="Sano S."/>
            <person name="Moriya S."/>
            <person name="Momiyama H."/>
            <person name="Satoh N."/>
            <person name="Takami S."/>
            <person name="Terashima Y."/>
            <person name="Suzuki O."/>
            <person name="Nakagawa S."/>
            <person name="Senoh A."/>
            <person name="Mizoguchi H."/>
            <person name="Goto Y."/>
            <person name="Shimizu F."/>
            <person name="Wakebe H."/>
            <person name="Hishigaki H."/>
            <person name="Watanabe T."/>
            <person name="Sugiyama A."/>
            <person name="Takemoto M."/>
            <person name="Kawakami B."/>
            <person name="Yamazaki M."/>
            <person name="Watanabe K."/>
            <person name="Kumagai A."/>
            <person name="Itakura S."/>
            <person name="Fukuzumi Y."/>
            <person name="Fujimori Y."/>
            <person name="Komiyama M."/>
            <person name="Tashiro H."/>
            <person name="Tanigami A."/>
            <person name="Fujiwara T."/>
            <person name="Ono T."/>
            <person name="Yamada K."/>
            <person name="Fujii Y."/>
            <person name="Ozaki K."/>
            <person name="Hirao M."/>
            <person name="Ohmori Y."/>
            <person name="Kawabata A."/>
            <person name="Hikiji T."/>
            <person name="Kobatake N."/>
            <person name="Inagaki H."/>
            <person name="Ikema Y."/>
            <person name="Okamoto S."/>
            <person name="Okitani R."/>
            <person name="Kawakami T."/>
            <person name="Noguchi S."/>
            <person name="Itoh T."/>
            <person name="Shigeta K."/>
            <person name="Senba T."/>
            <person name="Matsumura K."/>
            <person name="Nakajima Y."/>
            <person name="Mizuno T."/>
            <person name="Morinaga M."/>
            <person name="Sasaki M."/>
            <person name="Togashi T."/>
            <person name="Oyama M."/>
            <person name="Hata H."/>
            <person name="Watanabe M."/>
            <person name="Komatsu T."/>
            <person name="Mizushima-Sugano J."/>
            <person name="Satoh T."/>
            <person name="Shirai Y."/>
            <person name="Takahashi Y."/>
            <person name="Nakagawa K."/>
            <person name="Okumura K."/>
            <person name="Nagase T."/>
            <person name="Nomura N."/>
            <person name="Kikuchi H."/>
            <person name="Masuho Y."/>
            <person name="Yamashita R."/>
            <person name="Nakai K."/>
            <person name="Yada T."/>
            <person name="Nakamura Y."/>
            <person name="Ohara O."/>
            <person name="Isogai T."/>
            <person name="Sugano S."/>
        </authorList>
    </citation>
    <scope>NUCLEOTIDE SEQUENCE [LARGE SCALE MRNA]</scope>
    <source>
        <tissue>Prostate</tissue>
    </source>
</reference>
<reference key="5">
    <citation type="submission" date="2005-09" db="EMBL/GenBank/DDBJ databases">
        <authorList>
            <person name="Mural R.J."/>
            <person name="Istrail S."/>
            <person name="Sutton G.G."/>
            <person name="Florea L."/>
            <person name="Halpern A.L."/>
            <person name="Mobarry C.M."/>
            <person name="Lippert R."/>
            <person name="Walenz B."/>
            <person name="Shatkay H."/>
            <person name="Dew I."/>
            <person name="Miller J.R."/>
            <person name="Flanigan M.J."/>
            <person name="Edwards N.J."/>
            <person name="Bolanos R."/>
            <person name="Fasulo D."/>
            <person name="Halldorsson B.V."/>
            <person name="Hannenhalli S."/>
            <person name="Turner R."/>
            <person name="Yooseph S."/>
            <person name="Lu F."/>
            <person name="Nusskern D.R."/>
            <person name="Shue B.C."/>
            <person name="Zheng X.H."/>
            <person name="Zhong F."/>
            <person name="Delcher A.L."/>
            <person name="Huson D.H."/>
            <person name="Kravitz S.A."/>
            <person name="Mouchard L."/>
            <person name="Reinert K."/>
            <person name="Remington K.A."/>
            <person name="Clark A.G."/>
            <person name="Waterman M.S."/>
            <person name="Eichler E.E."/>
            <person name="Adams M.D."/>
            <person name="Hunkapiller M.W."/>
            <person name="Myers E.W."/>
            <person name="Venter J.C."/>
        </authorList>
    </citation>
    <scope>NUCLEOTIDE SEQUENCE [LARGE SCALE GENOMIC DNA]</scope>
</reference>
<reference key="6">
    <citation type="journal article" date="2004" name="Genome Res.">
        <title>The status, quality, and expansion of the NIH full-length cDNA project: the Mammalian Gene Collection (MGC).</title>
        <authorList>
            <consortium name="The MGC Project Team"/>
        </authorList>
    </citation>
    <scope>NUCLEOTIDE SEQUENCE [LARGE SCALE MRNA]</scope>
    <source>
        <tissue>Prostate</tissue>
    </source>
</reference>
<reference key="7">
    <citation type="journal article" date="2004" name="Proc. Natl. Acad. Sci. U.S.A.">
        <title>The human olfactory receptor gene family.</title>
        <authorList>
            <person name="Malnic B."/>
            <person name="Godfrey P.A."/>
            <person name="Buck L.B."/>
        </authorList>
    </citation>
    <scope>IDENTIFICATION</scope>
</reference>
<reference key="8">
    <citation type="journal article" date="2004" name="Proc. Natl. Acad. Sci. U.S.A.">
        <authorList>
            <person name="Malnic B."/>
            <person name="Godfrey P.A."/>
            <person name="Buck L.B."/>
        </authorList>
    </citation>
    <scope>ERRATUM OF PUBMED:14983052</scope>
</reference>
<reference key="9">
    <citation type="journal article" date="2006" name="Prostate">
        <title>The prostate-specific G-protein coupled receptors PSGR and PSGR2 are prostate cancer biomarkers that are complementary to alpha-methylacyl-CoA racemase.</title>
        <authorList>
            <person name="Wang J."/>
            <person name="Weng J."/>
            <person name="Cai Y."/>
            <person name="Penland R."/>
            <person name="Liu M."/>
            <person name="Ittmann M."/>
        </authorList>
    </citation>
    <scope>TISSUE SPECIFICITY</scope>
</reference>
<reference key="10">
    <citation type="journal article" date="2009" name="J. Biol. Chem.">
        <title>Activation of an olfactory receptor inhibits proliferation of prostate cancer cells.</title>
        <authorList>
            <person name="Neuhaus E.M."/>
            <person name="Zhang W."/>
            <person name="Gelis L."/>
            <person name="Deng Y."/>
            <person name="Noldus J."/>
            <person name="Hatt H."/>
        </authorList>
    </citation>
    <scope>FUNCTION</scope>
</reference>
<reference key="11">
    <citation type="journal article" date="2013" name="Proc. Natl. Acad. Sci. U.S.A.">
        <title>Olfactory receptor responding to gut microbiota-derived signals plays a role in renin secretion and blood pressure regulation.</title>
        <authorList>
            <person name="Pluznick J.L."/>
            <person name="Protzko R.J."/>
            <person name="Gevorgyan H."/>
            <person name="Peterlin Z."/>
            <person name="Sipos A."/>
            <person name="Han J."/>
            <person name="Brunet I."/>
            <person name="Wan L.X."/>
            <person name="Rey F."/>
            <person name="Wang T."/>
            <person name="Firestein S.J."/>
            <person name="Yanagisawa M."/>
            <person name="Gordon J.I."/>
            <person name="Eichmann A."/>
            <person name="Peti-Peterdi J."/>
            <person name="Caplan M.J."/>
        </authorList>
    </citation>
    <scope>FUNCTION</scope>
    <scope>SUBCELLULAR LOCATION</scope>
</reference>
<reference key="12">
    <citation type="journal article" date="2016" name="J. Biol. Chem.">
        <title>Functional characterization of the odorant receptor 51E2 in human melanocytes.</title>
        <authorList>
            <person name="Gelis L."/>
            <person name="Jovancevic N."/>
            <person name="Veitinger S."/>
            <person name="Mandal B."/>
            <person name="Arndt H.D."/>
            <person name="Neuhaus E.M."/>
            <person name="Hatt H."/>
        </authorList>
    </citation>
    <scope>TISSUE SPECIFICITY</scope>
    <scope>SUBCELLULAR LOCATION</scope>
    <scope>FUNCTION</scope>
</reference>
<reference key="13">
    <citation type="journal article" date="2017" name="Front. Physiol.">
        <title>Odorant receptor 51E2 agonist beta-ionone regulates RPE cell migration and proliferation.</title>
        <authorList>
            <person name="Jovancevic N."/>
            <person name="Khalfaoui S."/>
            <person name="Weinrich M."/>
            <person name="Weidinger D."/>
            <person name="Simon A."/>
            <person name="Kalbe B."/>
            <person name="Kernt M."/>
            <person name="Kampik A."/>
            <person name="Gisselmann G."/>
            <person name="Gelis L."/>
            <person name="Hatt H."/>
        </authorList>
    </citation>
    <scope>TISSUE SPECIFICITY</scope>
    <scope>FUNCTION</scope>
    <scope>SUBCELLULAR LOCATION</scope>
</reference>
<keyword id="KW-0002">3D-structure</keyword>
<keyword id="KW-1003">Cell membrane</keyword>
<keyword id="KW-1015">Disulfide bond</keyword>
<keyword id="KW-0967">Endosome</keyword>
<keyword id="KW-0297">G-protein coupled receptor</keyword>
<keyword id="KW-0325">Glycoprotein</keyword>
<keyword id="KW-0472">Membrane</keyword>
<keyword id="KW-0552">Olfaction</keyword>
<keyword id="KW-1267">Proteomics identification</keyword>
<keyword id="KW-0675">Receptor</keyword>
<keyword id="KW-1185">Reference proteome</keyword>
<keyword id="KW-0716">Sensory transduction</keyword>
<keyword id="KW-0807">Transducer</keyword>
<keyword id="KW-0812">Transmembrane</keyword>
<keyword id="KW-1133">Transmembrane helix</keyword>
<dbReference type="EMBL" id="AF311306">
    <property type="protein sequence ID" value="AAG40776.1"/>
    <property type="molecule type" value="Genomic_DNA"/>
</dbReference>
<dbReference type="EMBL" id="AF369708">
    <property type="protein sequence ID" value="AAK38728.1"/>
    <property type="molecule type" value="mRNA"/>
</dbReference>
<dbReference type="EMBL" id="AY033942">
    <property type="protein sequence ID" value="AAK57550.1"/>
    <property type="molecule type" value="mRNA"/>
</dbReference>
<dbReference type="EMBL" id="AK314051">
    <property type="protein sequence ID" value="BAG36760.1"/>
    <property type="molecule type" value="mRNA"/>
</dbReference>
<dbReference type="EMBL" id="CH471064">
    <property type="protein sequence ID" value="EAW68829.1"/>
    <property type="molecule type" value="Genomic_DNA"/>
</dbReference>
<dbReference type="EMBL" id="BC020768">
    <property type="protein sequence ID" value="AAH20768.1"/>
    <property type="molecule type" value="mRNA"/>
</dbReference>
<dbReference type="EMBL" id="BK004368">
    <property type="protein sequence ID" value="DAA04766.1"/>
    <property type="molecule type" value="Genomic_DNA"/>
</dbReference>
<dbReference type="CCDS" id="CCDS7751.1"/>
<dbReference type="RefSeq" id="NP_110401.1">
    <property type="nucleotide sequence ID" value="NM_030774.4"/>
</dbReference>
<dbReference type="PDB" id="8F76">
    <property type="method" value="EM"/>
    <property type="resolution" value="3.10 A"/>
    <property type="chains" value="A=2-320"/>
</dbReference>
<dbReference type="PDBsum" id="8F76"/>
<dbReference type="EMDB" id="EMD-28896"/>
<dbReference type="SMR" id="Q9H255"/>
<dbReference type="BioGRID" id="123434">
    <property type="interactions" value="10"/>
</dbReference>
<dbReference type="FunCoup" id="Q9H255">
    <property type="interactions" value="425"/>
</dbReference>
<dbReference type="IntAct" id="Q9H255">
    <property type="interactions" value="8"/>
</dbReference>
<dbReference type="STRING" id="9606.ENSP00000380153"/>
<dbReference type="ChEMBL" id="CHEMBL4523454"/>
<dbReference type="DrugCentral" id="Q9H255"/>
<dbReference type="TCDB" id="9.A.14.8.3">
    <property type="family name" value="the g-protein-coupled receptor (gpcr) family"/>
</dbReference>
<dbReference type="GlyCosmos" id="Q9H255">
    <property type="glycosylation" value="1 site, No reported glycans"/>
</dbReference>
<dbReference type="GlyGen" id="Q9H255">
    <property type="glycosylation" value="1 site"/>
</dbReference>
<dbReference type="BioMuta" id="OR51E2"/>
<dbReference type="DMDM" id="18202936"/>
<dbReference type="MassIVE" id="Q9H255"/>
<dbReference type="PaxDb" id="9606-ENSP00000380153"/>
<dbReference type="PeptideAtlas" id="Q9H255"/>
<dbReference type="ProteomicsDB" id="80502"/>
<dbReference type="Antibodypedia" id="23521">
    <property type="antibodies" value="122 antibodies from 25 providers"/>
</dbReference>
<dbReference type="DNASU" id="81285"/>
<dbReference type="Ensembl" id="ENST00000396950.4">
    <property type="protein sequence ID" value="ENSP00000380153.3"/>
    <property type="gene ID" value="ENSG00000167332.9"/>
</dbReference>
<dbReference type="Ensembl" id="ENST00000641638.1">
    <property type="protein sequence ID" value="ENSP00000493442.1"/>
    <property type="gene ID" value="ENSG00000167332.9"/>
</dbReference>
<dbReference type="GeneID" id="81285"/>
<dbReference type="KEGG" id="hsa:81285"/>
<dbReference type="MANE-Select" id="ENST00000396950.4">
    <property type="protein sequence ID" value="ENSP00000380153.3"/>
    <property type="RefSeq nucleotide sequence ID" value="NM_030774.4"/>
    <property type="RefSeq protein sequence ID" value="NP_110401.1"/>
</dbReference>
<dbReference type="UCSC" id="uc001lzk.3">
    <property type="organism name" value="human"/>
</dbReference>
<dbReference type="AGR" id="HGNC:15195"/>
<dbReference type="CTD" id="81285"/>
<dbReference type="DisGeNET" id="81285"/>
<dbReference type="GeneCards" id="OR51E2"/>
<dbReference type="HGNC" id="HGNC:15195">
    <property type="gene designation" value="OR51E2"/>
</dbReference>
<dbReference type="HPA" id="ENSG00000167332">
    <property type="expression patterns" value="Group enriched (intestine, prostate)"/>
</dbReference>
<dbReference type="MIM" id="611268">
    <property type="type" value="gene"/>
</dbReference>
<dbReference type="neXtProt" id="NX_Q9H255"/>
<dbReference type="OpenTargets" id="ENSG00000167332"/>
<dbReference type="PharmGKB" id="PA32372"/>
<dbReference type="VEuPathDB" id="HostDB:ENSG00000167332"/>
<dbReference type="eggNOG" id="ENOG502QVRN">
    <property type="taxonomic scope" value="Eukaryota"/>
</dbReference>
<dbReference type="GeneTree" id="ENSGT01130000278286"/>
<dbReference type="HOGENOM" id="CLU_012526_0_0_1"/>
<dbReference type="InParanoid" id="Q9H255"/>
<dbReference type="OMA" id="DMMKLAY"/>
<dbReference type="OrthoDB" id="5969463at2759"/>
<dbReference type="PAN-GO" id="Q9H255">
    <property type="GO annotations" value="2 GO annotations based on evolutionary models"/>
</dbReference>
<dbReference type="PhylomeDB" id="Q9H255"/>
<dbReference type="TreeFam" id="TF342735"/>
<dbReference type="PathwayCommons" id="Q9H255"/>
<dbReference type="Reactome" id="R-HSA-381753">
    <property type="pathway name" value="Olfactory Signaling Pathway"/>
</dbReference>
<dbReference type="Reactome" id="R-HSA-9752946">
    <property type="pathway name" value="Expression and translocation of olfactory receptors"/>
</dbReference>
<dbReference type="SignaLink" id="Q9H255"/>
<dbReference type="BioGRID-ORCS" id="81285">
    <property type="hits" value="12 hits in 752 CRISPR screens"/>
</dbReference>
<dbReference type="ChiTaRS" id="OR51E2">
    <property type="organism name" value="human"/>
</dbReference>
<dbReference type="GeneWiki" id="OR51E2"/>
<dbReference type="GenomeRNAi" id="81285"/>
<dbReference type="Pharos" id="Q9H255">
    <property type="development level" value="Tchem"/>
</dbReference>
<dbReference type="PRO" id="PR:Q9H255"/>
<dbReference type="Proteomes" id="UP000005640">
    <property type="component" value="Chromosome 11"/>
</dbReference>
<dbReference type="RNAct" id="Q9H255">
    <property type="molecule type" value="protein"/>
</dbReference>
<dbReference type="Bgee" id="ENSG00000167332">
    <property type="expression patterns" value="Expressed in pigmented layer of retina and 80 other cell types or tissues"/>
</dbReference>
<dbReference type="ExpressionAtlas" id="Q9H255">
    <property type="expression patterns" value="baseline and differential"/>
</dbReference>
<dbReference type="GO" id="GO:0031901">
    <property type="term" value="C:early endosome membrane"/>
    <property type="evidence" value="ECO:0000314"/>
    <property type="project" value="UniProtKB"/>
</dbReference>
<dbReference type="GO" id="GO:0043229">
    <property type="term" value="C:intracellular organelle"/>
    <property type="evidence" value="ECO:0000314"/>
    <property type="project" value="UniProtKB"/>
</dbReference>
<dbReference type="GO" id="GO:0005886">
    <property type="term" value="C:plasma membrane"/>
    <property type="evidence" value="ECO:0000314"/>
    <property type="project" value="UniProtKB"/>
</dbReference>
<dbReference type="GO" id="GO:0004930">
    <property type="term" value="F:G protein-coupled receptor activity"/>
    <property type="evidence" value="ECO:0007669"/>
    <property type="project" value="UniProtKB-KW"/>
</dbReference>
<dbReference type="GO" id="GO:0003707">
    <property type="term" value="F:nuclear steroid receptor activity"/>
    <property type="evidence" value="ECO:0000314"/>
    <property type="project" value="UniProtKB"/>
</dbReference>
<dbReference type="GO" id="GO:0004984">
    <property type="term" value="F:olfactory receptor activity"/>
    <property type="evidence" value="ECO:0000314"/>
    <property type="project" value="UniProtKB"/>
</dbReference>
<dbReference type="GO" id="GO:0038023">
    <property type="term" value="F:signaling receptor activity"/>
    <property type="evidence" value="ECO:0000250"/>
    <property type="project" value="UniProtKB"/>
</dbReference>
<dbReference type="GO" id="GO:0007189">
    <property type="term" value="P:adenylate cyclase-activating G protein-coupled receptor signaling pathway"/>
    <property type="evidence" value="ECO:0000315"/>
    <property type="project" value="UniProtKB"/>
</dbReference>
<dbReference type="GO" id="GO:0016477">
    <property type="term" value="P:cell migration"/>
    <property type="evidence" value="ECO:0000315"/>
    <property type="project" value="UniProtKB"/>
</dbReference>
<dbReference type="GO" id="GO:0071398">
    <property type="term" value="P:cellular response to fatty acid"/>
    <property type="evidence" value="ECO:0000250"/>
    <property type="project" value="UniProtKB"/>
</dbReference>
<dbReference type="GO" id="GO:0030318">
    <property type="term" value="P:melanocyte differentiation"/>
    <property type="evidence" value="ECO:0000315"/>
    <property type="project" value="UniProtKB"/>
</dbReference>
<dbReference type="GO" id="GO:0097325">
    <property type="term" value="P:melanocyte proliferation"/>
    <property type="evidence" value="ECO:0000315"/>
    <property type="project" value="UniProtKB"/>
</dbReference>
<dbReference type="GO" id="GO:0045777">
    <property type="term" value="P:positive regulation of blood pressure"/>
    <property type="evidence" value="ECO:0000250"/>
    <property type="project" value="UniProtKB"/>
</dbReference>
<dbReference type="GO" id="GO:1900135">
    <property type="term" value="P:positive regulation of renin secretion into blood stream"/>
    <property type="evidence" value="ECO:0000250"/>
    <property type="project" value="UniProtKB"/>
</dbReference>
<dbReference type="GO" id="GO:0043401">
    <property type="term" value="P:steroid hormone receptor signaling pathway"/>
    <property type="evidence" value="ECO:0000314"/>
    <property type="project" value="UniProtKB"/>
</dbReference>
<dbReference type="CDD" id="cd15222">
    <property type="entry name" value="7tmA_OR51-like"/>
    <property type="match status" value="1"/>
</dbReference>
<dbReference type="FunFam" id="1.20.1070.10:FF:000002">
    <property type="entry name" value="Olfactory receptor"/>
    <property type="match status" value="1"/>
</dbReference>
<dbReference type="Gene3D" id="1.20.1070.10">
    <property type="entry name" value="Rhodopsin 7-helix transmembrane proteins"/>
    <property type="match status" value="1"/>
</dbReference>
<dbReference type="InterPro" id="IPR000276">
    <property type="entry name" value="GPCR_Rhodpsn"/>
</dbReference>
<dbReference type="InterPro" id="IPR017452">
    <property type="entry name" value="GPCR_Rhodpsn_7TM"/>
</dbReference>
<dbReference type="InterPro" id="IPR000725">
    <property type="entry name" value="Olfact_rcpt"/>
</dbReference>
<dbReference type="InterPro" id="IPR050402">
    <property type="entry name" value="OR51/52/56-like"/>
</dbReference>
<dbReference type="PANTHER" id="PTHR26450:SF92">
    <property type="entry name" value="OLFACTORY RECEPTOR 51E2"/>
    <property type="match status" value="1"/>
</dbReference>
<dbReference type="PANTHER" id="PTHR26450">
    <property type="entry name" value="OLFACTORY RECEPTOR 56B1-RELATED"/>
    <property type="match status" value="1"/>
</dbReference>
<dbReference type="Pfam" id="PF13853">
    <property type="entry name" value="7tm_4"/>
    <property type="match status" value="1"/>
</dbReference>
<dbReference type="PRINTS" id="PR00237">
    <property type="entry name" value="GPCRRHODOPSN"/>
</dbReference>
<dbReference type="PRINTS" id="PR00245">
    <property type="entry name" value="OLFACTORYR"/>
</dbReference>
<dbReference type="SUPFAM" id="SSF81321">
    <property type="entry name" value="Family A G protein-coupled receptor-like"/>
    <property type="match status" value="1"/>
</dbReference>
<dbReference type="PROSITE" id="PS00237">
    <property type="entry name" value="G_PROTEIN_RECEP_F1_1"/>
    <property type="match status" value="1"/>
</dbReference>
<dbReference type="PROSITE" id="PS50262">
    <property type="entry name" value="G_PROTEIN_RECEP_F1_2"/>
    <property type="match status" value="1"/>
</dbReference>
<evidence type="ECO:0000250" key="1">
    <source>
        <dbReference type="UniProtKB" id="Q8VBV9"/>
    </source>
</evidence>
<evidence type="ECO:0000255" key="2"/>
<evidence type="ECO:0000255" key="3">
    <source>
        <dbReference type="PROSITE-ProRule" id="PRU00521"/>
    </source>
</evidence>
<evidence type="ECO:0000269" key="4">
    <source>
    </source>
</evidence>
<evidence type="ECO:0000269" key="5">
    <source>
    </source>
</evidence>
<evidence type="ECO:0000269" key="6">
    <source>
    </source>
</evidence>
<evidence type="ECO:0000269" key="7">
    <source>
    </source>
</evidence>
<evidence type="ECO:0000269" key="8">
    <source>
    </source>
</evidence>
<evidence type="ECO:0000269" key="9">
    <source>
    </source>
</evidence>
<evidence type="ECO:0000269" key="10">
    <source>
    </source>
</evidence>
<evidence type="ECO:0000303" key="11">
    <source>
    </source>
</evidence>
<evidence type="ECO:0000312" key="12">
    <source>
        <dbReference type="HGNC" id="HGNC:15195"/>
    </source>
</evidence>
<evidence type="ECO:0007829" key="13">
    <source>
        <dbReference type="PDB" id="8F76"/>
    </source>
</evidence>
<organism>
    <name type="scientific">Homo sapiens</name>
    <name type="common">Human</name>
    <dbReference type="NCBI Taxonomy" id="9606"/>
    <lineage>
        <taxon>Eukaryota</taxon>
        <taxon>Metazoa</taxon>
        <taxon>Chordata</taxon>
        <taxon>Craniata</taxon>
        <taxon>Vertebrata</taxon>
        <taxon>Euteleostomi</taxon>
        <taxon>Mammalia</taxon>
        <taxon>Eutheria</taxon>
        <taxon>Euarchontoglires</taxon>
        <taxon>Primates</taxon>
        <taxon>Haplorrhini</taxon>
        <taxon>Catarrhini</taxon>
        <taxon>Hominidae</taxon>
        <taxon>Homo</taxon>
    </lineage>
</organism>
<accession>Q9H255</accession>
<accession>B2RA63</accession>
<accession>Q6IF94</accession>
<comment type="function">
    <text evidence="1 7 8 9 10">Olfactory receptor (PubMed:27226631, PubMed:29249973). Activated by the odorant, beta-ionone, a synthetic terpenoid (PubMed:19389702, PubMed:27226631, PubMed:29249973). The activity of this receptor is probably mediated by G-proteins leading to the elevation of intracellular Ca(2+), cAMP and activation of the protein kinases PKA and MAPK3/MAPK1 (PubMed:27226631, PubMed:29249973). Stimulation of OR51E2 by beta-ionone affects melanocyte proliferation, differentiation, and melanogenesis (PubMed:27226631). Activation of OR51E2 by beta-ionone increases proliferation and migration of primary retinal pigment epithelial (RPE) cells (PubMed:29249973). Activated also by the short-chain fatty acids (SCFA) acetate and propionate. In response to SCFA, may positively regulate renin secretion and increase blood pressure (PubMed:23401498). May also be activated by steroid hormones and regulate cell proliferation (PubMed:19389702). Activated by L-lactate in glomus cells (By similarity).</text>
</comment>
<comment type="subcellular location">
    <subcellularLocation>
        <location evidence="8 9 10">Cell membrane</location>
        <topology evidence="2">Multi-pass membrane protein</topology>
    </subcellularLocation>
    <subcellularLocation>
        <location evidence="9">Early endosome membrane</location>
        <topology evidence="2">Multi-pass membrane protein</topology>
    </subcellularLocation>
</comment>
<comment type="tissue specificity">
    <text evidence="5 6 9 10">Highly expressed in the prostate (PubMed:11707321). Also expressed in spleen, liver, olfactory epithelium, retinal pigment epithelium and medulla oblongata (PubMed:11707321, PubMed:16491480, PubMed:29249973). In the retinal pigment epithelium expression is restricted to the pigment cells and choroid (at protein level) (PubMed:29249973). Expressed in epidermal melanocytes (at protein level) (PubMed:27226631).</text>
</comment>
<comment type="induction">
    <text evidence="4">Up-regulated in prostate cancer.</text>
</comment>
<comment type="similarity">
    <text evidence="3">Belongs to the G-protein coupled receptor 1 family.</text>
</comment>
<comment type="caution">
    <text evidence="8 9 10">Contradictory results have been reported for activation of this receptor by beta-ionone in human and mouse. Beta-ionone does not activate OR51E2 in mouse. This difference may depend on the different methods used for the experiment or may be due to species difference.</text>
</comment>
<comment type="online information" name="Human Olfactory Receptor Data Exploratorium (HORDE)">
    <link uri="http://genome.weizmann.ac.il/horde/card/index/symbol:OR51E2"/>
</comment>
<sequence>MSSCNFTHATFVLIGIPGLEKAHFWVGFPLLSMYVVAMFGNCIVVFIVRTERSLHAPMYLFLCMLAAIDLALSTSTMPKILALFWFDSREISFEACLTQMFFIHALSAIESTILLAMAFDRYVAICHPLRHAAVLNNTVTAQIGIVAVVRGSLFFFPLPLLIKRLAFCHSNVLSHSYCVHQDVMKLAYADTLPNVVYGLTAILLVMGVDVMFISLSYFLIIRTVLQLPSKSERAKAFGTCVSHIGVVLAFYVPLIGLSVVHRFGNSLHPIVRVVMGDIYLLLPPVINPIIYGAKTKQIRTRVLAMFKISCDKDLQAVGGK</sequence>
<proteinExistence type="evidence at protein level"/>
<protein>
    <recommendedName>
        <fullName>Olfactory receptor 51E2</fullName>
    </recommendedName>
    <alternativeName>
        <fullName>HPRAJ</fullName>
    </alternativeName>
    <alternativeName>
        <fullName>Olfactory receptor OR11-16</fullName>
    </alternativeName>
    <alternativeName>
        <fullName evidence="11">Prostate-specific G-protein coupled receptor</fullName>
    </alternativeName>
</protein>
<feature type="chain" id="PRO_0000150751" description="Olfactory receptor 51E2">
    <location>
        <begin position="1"/>
        <end position="320"/>
    </location>
</feature>
<feature type="topological domain" description="Extracellular" evidence="2">
    <location>
        <begin position="1"/>
        <end position="24"/>
    </location>
</feature>
<feature type="transmembrane region" description="Helical; Name=1" evidence="2">
    <location>
        <begin position="25"/>
        <end position="45"/>
    </location>
</feature>
<feature type="topological domain" description="Cytoplasmic" evidence="2">
    <location>
        <begin position="46"/>
        <end position="53"/>
    </location>
</feature>
<feature type="transmembrane region" description="Helical; Name=2" evidence="2">
    <location>
        <begin position="54"/>
        <end position="74"/>
    </location>
</feature>
<feature type="topological domain" description="Extracellular" evidence="2">
    <location>
        <begin position="75"/>
        <end position="98"/>
    </location>
</feature>
<feature type="transmembrane region" description="Helical; Name=3" evidence="2">
    <location>
        <begin position="99"/>
        <end position="119"/>
    </location>
</feature>
<feature type="topological domain" description="Cytoplasmic" evidence="2">
    <location>
        <begin position="120"/>
        <end position="138"/>
    </location>
</feature>
<feature type="transmembrane region" description="Helical; Name=4" evidence="2">
    <location>
        <begin position="139"/>
        <end position="159"/>
    </location>
</feature>
<feature type="topological domain" description="Extracellular" evidence="2">
    <location>
        <begin position="160"/>
        <end position="195"/>
    </location>
</feature>
<feature type="transmembrane region" description="Helical; Name=5" evidence="2">
    <location>
        <begin position="196"/>
        <end position="216"/>
    </location>
</feature>
<feature type="topological domain" description="Cytoplasmic" evidence="2">
    <location>
        <begin position="217"/>
        <end position="236"/>
    </location>
</feature>
<feature type="transmembrane region" description="Helical; Name=6" evidence="2">
    <location>
        <begin position="237"/>
        <end position="257"/>
    </location>
</feature>
<feature type="topological domain" description="Extracellular" evidence="2">
    <location>
        <begin position="258"/>
        <end position="272"/>
    </location>
</feature>
<feature type="transmembrane region" description="Helical; Name=7" evidence="2">
    <location>
        <begin position="273"/>
        <end position="293"/>
    </location>
</feature>
<feature type="topological domain" description="Cytoplasmic" evidence="2">
    <location>
        <begin position="294"/>
        <end position="320"/>
    </location>
</feature>
<feature type="glycosylation site" description="N-linked (GlcNAc...) asparagine" evidence="2">
    <location>
        <position position="5"/>
    </location>
</feature>
<feature type="disulfide bond" evidence="3">
    <location>
        <begin position="96"/>
        <end position="178"/>
    </location>
</feature>
<feature type="strand" evidence="13">
    <location>
        <begin position="9"/>
        <end position="12"/>
    </location>
</feature>
<feature type="helix" evidence="13">
    <location>
        <begin position="23"/>
        <end position="47"/>
    </location>
</feature>
<feature type="helix" evidence="13">
    <location>
        <begin position="52"/>
        <end position="54"/>
    </location>
</feature>
<feature type="helix" evidence="13">
    <location>
        <begin position="57"/>
        <end position="86"/>
    </location>
</feature>
<feature type="strand" evidence="13">
    <location>
        <begin position="90"/>
        <end position="92"/>
    </location>
</feature>
<feature type="helix" evidence="13">
    <location>
        <begin position="93"/>
        <end position="126"/>
    </location>
</feature>
<feature type="helix" evidence="13">
    <location>
        <begin position="131"/>
        <end position="134"/>
    </location>
</feature>
<feature type="helix" evidence="13">
    <location>
        <begin position="137"/>
        <end position="155"/>
    </location>
</feature>
<feature type="helix" evidence="13">
    <location>
        <begin position="157"/>
        <end position="162"/>
    </location>
</feature>
<feature type="strand" evidence="13">
    <location>
        <begin position="174"/>
        <end position="177"/>
    </location>
</feature>
<feature type="turn" evidence="13">
    <location>
        <begin position="180"/>
        <end position="182"/>
    </location>
</feature>
<feature type="helix" evidence="13">
    <location>
        <begin position="184"/>
        <end position="186"/>
    </location>
</feature>
<feature type="helix" evidence="13">
    <location>
        <begin position="192"/>
        <end position="224"/>
    </location>
</feature>
<feature type="helix" evidence="13">
    <location>
        <begin position="230"/>
        <end position="262"/>
    </location>
</feature>
<feature type="helix" evidence="13">
    <location>
        <begin position="269"/>
        <end position="280"/>
    </location>
</feature>
<feature type="helix" evidence="13">
    <location>
        <begin position="283"/>
        <end position="291"/>
    </location>
</feature>
<feature type="helix" evidence="13">
    <location>
        <begin position="296"/>
        <end position="304"/>
    </location>
</feature>
<name>O51E2_HUMAN</name>